<feature type="chain" id="PRO_0000331170" description="Spermidine export protein MdtJ">
    <location>
        <begin position="1"/>
        <end position="121"/>
    </location>
</feature>
<feature type="transmembrane region" description="Helical" evidence="1">
    <location>
        <begin position="1"/>
        <end position="21"/>
    </location>
</feature>
<feature type="transmembrane region" description="Helical" evidence="1">
    <location>
        <begin position="32"/>
        <end position="52"/>
    </location>
</feature>
<feature type="transmembrane region" description="Helical" evidence="1">
    <location>
        <begin position="55"/>
        <end position="75"/>
    </location>
</feature>
<feature type="transmembrane region" description="Helical" evidence="1">
    <location>
        <begin position="82"/>
        <end position="102"/>
    </location>
</feature>
<proteinExistence type="inferred from homology"/>
<comment type="function">
    <text evidence="1">Catalyzes the excretion of spermidine.</text>
</comment>
<comment type="subunit">
    <text evidence="1">Forms a complex with MdtI.</text>
</comment>
<comment type="subcellular location">
    <subcellularLocation>
        <location evidence="1">Cell inner membrane</location>
        <topology evidence="1">Multi-pass membrane protein</topology>
    </subcellularLocation>
</comment>
<comment type="similarity">
    <text evidence="1">Belongs to the drug/metabolite transporter (DMT) superfamily. Small multidrug resistance (SMR) (TC 2.A.7.1) family. MdtJ subfamily.</text>
</comment>
<keyword id="KW-0997">Cell inner membrane</keyword>
<keyword id="KW-1003">Cell membrane</keyword>
<keyword id="KW-0472">Membrane</keyword>
<keyword id="KW-0812">Transmembrane</keyword>
<keyword id="KW-1133">Transmembrane helix</keyword>
<keyword id="KW-0813">Transport</keyword>
<accession>A8A0E1</accession>
<evidence type="ECO:0000255" key="1">
    <source>
        <dbReference type="HAMAP-Rule" id="MF_01598"/>
    </source>
</evidence>
<sequence length="121" mass="13115">MYIYWILLGLAIATEITGTLSMKWASVSEGNGGFILMLVMISLSYIFLSFAVKKIALGVAYALWEGIGILFITLFSVLLFDESLSLMKIAGLTTLVAGIVLIKSGTRKARKPELEVNHGAV</sequence>
<reference key="1">
    <citation type="journal article" date="2008" name="J. Bacteriol.">
        <title>The pangenome structure of Escherichia coli: comparative genomic analysis of E. coli commensal and pathogenic isolates.</title>
        <authorList>
            <person name="Rasko D.A."/>
            <person name="Rosovitz M.J."/>
            <person name="Myers G.S.A."/>
            <person name="Mongodin E.F."/>
            <person name="Fricke W.F."/>
            <person name="Gajer P."/>
            <person name="Crabtree J."/>
            <person name="Sebaihia M."/>
            <person name="Thomson N.R."/>
            <person name="Chaudhuri R."/>
            <person name="Henderson I.R."/>
            <person name="Sperandio V."/>
            <person name="Ravel J."/>
        </authorList>
    </citation>
    <scope>NUCLEOTIDE SEQUENCE [LARGE SCALE GENOMIC DNA]</scope>
    <source>
        <strain>HS</strain>
    </source>
</reference>
<protein>
    <recommendedName>
        <fullName evidence="1">Spermidine export protein MdtJ</fullName>
    </recommendedName>
</protein>
<organism>
    <name type="scientific">Escherichia coli O9:H4 (strain HS)</name>
    <dbReference type="NCBI Taxonomy" id="331112"/>
    <lineage>
        <taxon>Bacteria</taxon>
        <taxon>Pseudomonadati</taxon>
        <taxon>Pseudomonadota</taxon>
        <taxon>Gammaproteobacteria</taxon>
        <taxon>Enterobacterales</taxon>
        <taxon>Enterobacteriaceae</taxon>
        <taxon>Escherichia</taxon>
    </lineage>
</organism>
<gene>
    <name evidence="1" type="primary">mdtJ</name>
    <name type="ordered locus">EcHS_A1674</name>
</gene>
<name>MDTJ_ECOHS</name>
<dbReference type="EMBL" id="CP000802">
    <property type="protein sequence ID" value="ABV05995.1"/>
    <property type="molecule type" value="Genomic_DNA"/>
</dbReference>
<dbReference type="RefSeq" id="WP_000276149.1">
    <property type="nucleotide sequence ID" value="NC_009800.1"/>
</dbReference>
<dbReference type="SMR" id="A8A0E1"/>
<dbReference type="GeneID" id="93775748"/>
<dbReference type="KEGG" id="ecx:EcHS_A1674"/>
<dbReference type="HOGENOM" id="CLU_133067_0_0_6"/>
<dbReference type="GO" id="GO:0005886">
    <property type="term" value="C:plasma membrane"/>
    <property type="evidence" value="ECO:0007669"/>
    <property type="project" value="UniProtKB-SubCell"/>
</dbReference>
<dbReference type="GO" id="GO:0015199">
    <property type="term" value="F:amino-acid betaine transmembrane transporter activity"/>
    <property type="evidence" value="ECO:0007669"/>
    <property type="project" value="TreeGrafter"/>
</dbReference>
<dbReference type="GO" id="GO:0015297">
    <property type="term" value="F:antiporter activity"/>
    <property type="evidence" value="ECO:0007669"/>
    <property type="project" value="TreeGrafter"/>
</dbReference>
<dbReference type="GO" id="GO:0015220">
    <property type="term" value="F:choline transmembrane transporter activity"/>
    <property type="evidence" value="ECO:0007669"/>
    <property type="project" value="TreeGrafter"/>
</dbReference>
<dbReference type="GO" id="GO:0015606">
    <property type="term" value="F:spermidine transmembrane transporter activity"/>
    <property type="evidence" value="ECO:0007669"/>
    <property type="project" value="UniProtKB-UniRule"/>
</dbReference>
<dbReference type="GO" id="GO:0031460">
    <property type="term" value="P:glycine betaine transport"/>
    <property type="evidence" value="ECO:0007669"/>
    <property type="project" value="TreeGrafter"/>
</dbReference>
<dbReference type="FunFam" id="1.10.3730.20:FF:000001">
    <property type="entry name" value="Quaternary ammonium compound resistance transporter SugE"/>
    <property type="match status" value="1"/>
</dbReference>
<dbReference type="Gene3D" id="1.10.3730.20">
    <property type="match status" value="1"/>
</dbReference>
<dbReference type="HAMAP" id="MF_01598">
    <property type="entry name" value="MdtJ"/>
    <property type="match status" value="1"/>
</dbReference>
<dbReference type="InterPro" id="IPR000390">
    <property type="entry name" value="Small_drug/metabolite_transptr"/>
</dbReference>
<dbReference type="InterPro" id="IPR045324">
    <property type="entry name" value="Small_multidrug_res"/>
</dbReference>
<dbReference type="InterPro" id="IPR023740">
    <property type="entry name" value="Spermidine_export_MdtJ"/>
</dbReference>
<dbReference type="NCBIfam" id="NF007767">
    <property type="entry name" value="PRK10452.1"/>
    <property type="match status" value="1"/>
</dbReference>
<dbReference type="PANTHER" id="PTHR30561">
    <property type="entry name" value="SMR FAMILY PROTON-DEPENDENT DRUG EFFLUX TRANSPORTER SUGE"/>
    <property type="match status" value="1"/>
</dbReference>
<dbReference type="PANTHER" id="PTHR30561:SF2">
    <property type="entry name" value="SPERMIDINE EXPORT PROTEIN MDTJ"/>
    <property type="match status" value="1"/>
</dbReference>
<dbReference type="Pfam" id="PF00893">
    <property type="entry name" value="Multi_Drug_Res"/>
    <property type="match status" value="1"/>
</dbReference>
<dbReference type="SUPFAM" id="SSF103481">
    <property type="entry name" value="Multidrug resistance efflux transporter EmrE"/>
    <property type="match status" value="1"/>
</dbReference>